<name>OLD_THESS</name>
<comment type="function">
    <text evidence="2">An exodeoxyribonuclease that degrades linear or supercoiled dsDNA from 5'-3'. Nicks and linearizes circular DNA. Activity is not stimulated by ATP or AMP-PNP, although it has DNA-stimulated ATPase activity.</text>
</comment>
<comment type="catalytic activity">
    <reaction evidence="2">
        <text>Exonucleolytic cleavage in the 5'- to 3'-direction to yield nucleoside 5'-phosphates.</text>
        <dbReference type="EC" id="3.1.11.3"/>
    </reaction>
</comment>
<comment type="cofactor">
    <cofactor evidence="2">
        <name>Mg(2+)</name>
        <dbReference type="ChEBI" id="CHEBI:18420"/>
    </cofactor>
    <cofactor evidence="2">
        <name>Mn(2+)</name>
        <dbReference type="ChEBI" id="CHEBI:29035"/>
    </cofactor>
    <cofactor evidence="2">
        <name>Ca(2+)</name>
        <dbReference type="ChEBI" id="CHEBI:29108"/>
    </cofactor>
    <text evidence="2">Probably binds 2 metal cations. In vitro during a short incubation, Mn(2+) is most efficient on linear or supercoiled dsDNA, nicks but only poorly digests dsDNA with Co(2+), Ni(2+) or Zn(2+). When purified from E.coli Ca(2+) and Mg(2+) are the most abundant metals.</text>
</comment>
<comment type="biophysicochemical properties">
    <kinetics>
        <KM evidence="2">180 uM for ATP</KM>
        <text evidence="2">kcat is 0.44 min(-1) for ATPase at 65 degrees Celsius.</text>
    </kinetics>
    <temperatureDependence>
        <text evidence="2">Optimum temperature is 65 degrees Celsius for the ATPase activity.</text>
    </temperatureDependence>
</comment>
<comment type="subunit">
    <text evidence="2">Homodimer.</text>
</comment>
<comment type="domain">
    <text evidence="2">The ATPase domain dimerizes on its own via its dimerization region, the Toprim (topoisomerase/primase) domain does not. The Toprim domain has Mn(2+)-dependent nuclease activity on linear and supercoiled dsDNA. It faces away from the dimerization domain.</text>
</comment>
<comment type="similarity">
    <text evidence="5">Belongs to the class 1 OLD nuclease family.</text>
</comment>
<gene>
    <name evidence="3" type="primary">old</name>
    <name type="ordered locus">TSC_c04750</name>
</gene>
<accession>E8PLM2</accession>
<feature type="chain" id="PRO_0000456031" description="OLD nuclease">
    <location>
        <begin position="1"/>
        <end position="528"/>
    </location>
</feature>
<feature type="region of interest" description="ATPase domain N-terminus" evidence="5">
    <location>
        <begin position="1"/>
        <end position="153"/>
    </location>
</feature>
<feature type="region of interest" description="Dimerization domain" evidence="5">
    <location>
        <begin position="154"/>
        <end position="245"/>
    </location>
</feature>
<feature type="region of interest" description="ATPase domain C-terminus" evidence="5">
    <location>
        <begin position="246"/>
        <end position="369"/>
    </location>
</feature>
<feature type="region of interest" description="Toprim domain" evidence="5">
    <location>
        <begin position="370"/>
        <end position="528"/>
    </location>
</feature>
<feature type="region of interest" description="Disordered" evidence="1">
    <location>
        <begin position="440"/>
        <end position="461"/>
    </location>
</feature>
<feature type="active site" description="Stabilizes transition state or protonates leaving group" evidence="5">
    <location>
        <position position="487"/>
    </location>
</feature>
<feature type="binding site" evidence="5">
    <location>
        <begin position="31"/>
        <end position="35"/>
    </location>
    <ligand>
        <name>ATP</name>
        <dbReference type="ChEBI" id="CHEBI:30616"/>
    </ligand>
</feature>
<feature type="binding site" evidence="5">
    <location>
        <position position="377"/>
    </location>
    <ligand>
        <name>a divalent metal cation</name>
        <dbReference type="ChEBI" id="CHEBI:60240"/>
        <label>1</label>
    </ligand>
</feature>
<feature type="binding site" evidence="5">
    <location>
        <position position="381"/>
    </location>
    <ligand>
        <name>a divalent metal cation</name>
        <dbReference type="ChEBI" id="CHEBI:60240"/>
        <label>2</label>
    </ligand>
</feature>
<feature type="binding site" evidence="5">
    <location>
        <position position="431"/>
    </location>
    <ligand>
        <name>a divalent metal cation</name>
        <dbReference type="ChEBI" id="CHEBI:60240"/>
        <label>1</label>
    </ligand>
</feature>
<feature type="binding site" evidence="5">
    <location>
        <position position="433"/>
    </location>
    <ligand>
        <name>a divalent metal cation</name>
        <dbReference type="ChEBI" id="CHEBI:60240"/>
        <label>1</label>
    </ligand>
</feature>
<feature type="binding site" evidence="5">
    <location>
        <position position="478"/>
    </location>
    <ligand>
        <name>a divalent metal cation</name>
        <dbReference type="ChEBI" id="CHEBI:60240"/>
        <label>2</label>
    </ligand>
</feature>
<feature type="binding site" evidence="5">
    <location>
        <position position="480"/>
    </location>
    <ligand>
        <name>a divalent metal cation</name>
        <dbReference type="ChEBI" id="CHEBI:60240"/>
        <label>2</label>
    </ligand>
</feature>
<feature type="mutagenesis site" description="Loss of ATPase, no change in exonuclease activity." evidence="2">
    <original>K</original>
    <variation>A</variation>
    <location>
        <position position="34"/>
    </location>
</feature>
<feature type="mutagenesis site" description="Loss of ATPase." evidence="2">
    <original>H</original>
    <variation>A</variation>
    <location>
        <position position="140"/>
    </location>
</feature>
<feature type="mutagenesis site" description="2.4-fold decrease in ATPase." evidence="2">
    <original>H</original>
    <variation>Q</variation>
    <location>
        <position position="140"/>
    </location>
</feature>
<feature type="mutagenesis site" description="Loss of ATPase, no change in exonuclease activity." evidence="2">
    <original>E</original>
    <variation>A</variation>
    <location>
        <position position="276"/>
    </location>
</feature>
<feature type="mutagenesis site" description="4-fold decrease in ATPase, no change in exonuclease activity." evidence="2">
    <original>H</original>
    <variation>A</variation>
    <location>
        <position position="283"/>
    </location>
</feature>
<feature type="mutagenesis site" description="Nearly complete loss of ATPase." evidence="2">
    <original>H</original>
    <variation>D</variation>
    <location>
        <position position="283"/>
    </location>
</feature>
<feature type="mutagenesis site" description="Loss of ATPase." evidence="2">
    <original>H</original>
    <variation>A</variation>
    <location>
        <position position="310"/>
    </location>
</feature>
<feature type="mutagenesis site" description="No change in exonuclease or nicking activity. Loss of exonuclease but not nicking; when associated with A-431 and A-433." evidence="2">
    <original>E</original>
    <variation>A</variation>
    <location>
        <position position="377"/>
    </location>
</feature>
<feature type="mutagenesis site" description="No change in exonuclease or nicking activity. Loss of exonuclease but not nicking; when associated with A-478 and A-480." evidence="2">
    <original>D</original>
    <variation>A</variation>
    <location>
        <position position="381"/>
    </location>
</feature>
<feature type="mutagenesis site" description="No change in exonuclease or nicking activity. Loss of exonuclease but not nicking; when associated with A-377 and A-433. Loss of exonuclease and nicking; when associated with A-433; A-478 and A-480." evidence="2">
    <original>D</original>
    <variation>A</variation>
    <location>
        <position position="431"/>
    </location>
</feature>
<feature type="mutagenesis site" description="No change in exonuclease or nicking activity. Loss of exonuclease but not nicking; when associated with A-377 and A-431. Loss of exonuclease and nicking; when associated with A-431; A-478 and A-480." evidence="2">
    <original>D</original>
    <variation>A</variation>
    <location>
        <position position="433"/>
    </location>
</feature>
<feature type="mutagenesis site" description="No change in exonuclease or nicking activity. Loss of exonuclease but not nicking; when associated with A-381 and A-480. Loss of exonuclease and nicking; when associated with A-431; A-433 and A-480." evidence="2">
    <original>S</original>
    <variation>A</variation>
    <location>
        <position position="478"/>
    </location>
</feature>
<feature type="mutagenesis site" description="No change in exonuclease or nicking activity. Loss of exonuclease but not nicking; when associated with A-381 and A-478. Loss of exonuclease and nicking; when associated with A-431; A-433 and A-478." evidence="2">
    <original>E</original>
    <variation>A</variation>
    <location>
        <position position="480"/>
    </location>
</feature>
<feature type="mutagenesis site" description="Reduced exonuclease, reduced nicking activity." evidence="2">
    <original>R</original>
    <variation>A</variation>
    <location>
        <position position="487"/>
    </location>
</feature>
<feature type="mutagenesis site" description="Loss of exonuclease, reduced nicking activity." evidence="2">
    <original>R</original>
    <variation>E</variation>
    <location>
        <position position="487"/>
    </location>
</feature>
<feature type="strand" evidence="8">
    <location>
        <begin position="2"/>
        <end position="10"/>
    </location>
</feature>
<feature type="strand" evidence="8">
    <location>
        <begin position="13"/>
        <end position="19"/>
    </location>
</feature>
<feature type="strand" evidence="8">
    <location>
        <begin position="22"/>
        <end position="27"/>
    </location>
</feature>
<feature type="turn" evidence="8">
    <location>
        <begin position="30"/>
        <end position="33"/>
    </location>
</feature>
<feature type="helix" evidence="8">
    <location>
        <begin position="34"/>
        <end position="45"/>
    </location>
</feature>
<feature type="strand" evidence="8">
    <location>
        <begin position="46"/>
        <end position="48"/>
    </location>
</feature>
<feature type="helix" evidence="8">
    <location>
        <begin position="52"/>
        <end position="54"/>
    </location>
</feature>
<feature type="turn" evidence="8">
    <location>
        <begin position="57"/>
        <end position="60"/>
    </location>
</feature>
<feature type="helix" evidence="8">
    <location>
        <begin position="62"/>
        <end position="64"/>
    </location>
</feature>
<feature type="strand" evidence="8">
    <location>
        <begin position="70"/>
        <end position="82"/>
    </location>
</feature>
<feature type="strand" evidence="8">
    <location>
        <begin position="85"/>
        <end position="97"/>
    </location>
</feature>
<feature type="strand" evidence="8">
    <location>
        <begin position="100"/>
        <end position="109"/>
    </location>
</feature>
<feature type="helix" evidence="8">
    <location>
        <begin position="127"/>
        <end position="132"/>
    </location>
</feature>
<feature type="strand" evidence="8">
    <location>
        <begin position="135"/>
        <end position="138"/>
    </location>
</feature>
<feature type="helix" evidence="8">
    <location>
        <begin position="154"/>
        <end position="166"/>
    </location>
</feature>
<feature type="helix" evidence="8">
    <location>
        <begin position="170"/>
        <end position="184"/>
    </location>
</feature>
<feature type="helix" evidence="8">
    <location>
        <begin position="187"/>
        <end position="205"/>
    </location>
</feature>
<feature type="helix" evidence="8">
    <location>
        <begin position="227"/>
        <end position="229"/>
    </location>
</feature>
<feature type="helix" evidence="8">
    <location>
        <begin position="246"/>
        <end position="266"/>
    </location>
</feature>
<feature type="strand" evidence="8">
    <location>
        <begin position="272"/>
        <end position="276"/>
    </location>
</feature>
<feature type="turn" evidence="8">
    <location>
        <begin position="278"/>
        <end position="281"/>
    </location>
</feature>
<feature type="helix" evidence="8">
    <location>
        <begin position="284"/>
        <end position="299"/>
    </location>
</feature>
<feature type="strand" evidence="8">
    <location>
        <begin position="304"/>
        <end position="308"/>
    </location>
</feature>
<feature type="turn" evidence="8">
    <location>
        <begin position="312"/>
        <end position="314"/>
    </location>
</feature>
<feature type="strand" evidence="8">
    <location>
        <begin position="323"/>
        <end position="328"/>
    </location>
</feature>
<feature type="strand" evidence="8">
    <location>
        <begin position="334"/>
        <end position="337"/>
    </location>
</feature>
<feature type="helix" evidence="8">
    <location>
        <begin position="341"/>
        <end position="355"/>
    </location>
</feature>
<feature type="helix" evidence="8">
    <location>
        <begin position="362"/>
        <end position="369"/>
    </location>
</feature>
<feature type="strand" evidence="8">
    <location>
        <begin position="371"/>
        <end position="378"/>
    </location>
</feature>
<feature type="helix" evidence="8">
    <location>
        <begin position="379"/>
        <end position="391"/>
    </location>
</feature>
<feature type="turn" evidence="8">
    <location>
        <begin position="396"/>
        <end position="400"/>
    </location>
</feature>
<feature type="strand" evidence="8">
    <location>
        <begin position="401"/>
        <end position="405"/>
    </location>
</feature>
<feature type="helix" evidence="8">
    <location>
        <begin position="409"/>
        <end position="422"/>
    </location>
</feature>
<feature type="strand" evidence="8">
    <location>
        <begin position="426"/>
        <end position="431"/>
    </location>
</feature>
<feature type="helix" evidence="8">
    <location>
        <begin position="443"/>
        <end position="467"/>
    </location>
</feature>
<feature type="helix" evidence="8">
    <location>
        <begin position="469"/>
        <end position="471"/>
    </location>
</feature>
<feature type="strand" evidence="8">
    <location>
        <begin position="472"/>
        <end position="477"/>
    </location>
</feature>
<feature type="helix" evidence="8">
    <location>
        <begin position="479"/>
        <end position="483"/>
    </location>
</feature>
<feature type="helix" evidence="8">
    <location>
        <begin position="488"/>
        <end position="491"/>
    </location>
</feature>
<feature type="helix" evidence="8">
    <location>
        <begin position="493"/>
        <end position="501"/>
    </location>
</feature>
<feature type="turn" evidence="8">
    <location>
        <begin position="510"/>
        <end position="512"/>
    </location>
</feature>
<feature type="helix" evidence="8">
    <location>
        <begin position="513"/>
        <end position="523"/>
    </location>
</feature>
<evidence type="ECO:0000256" key="1">
    <source>
        <dbReference type="SAM" id="MobiDB-lite"/>
    </source>
</evidence>
<evidence type="ECO:0000269" key="2">
    <source>
    </source>
</evidence>
<evidence type="ECO:0000303" key="3">
    <source>
    </source>
</evidence>
<evidence type="ECO:0000305" key="4"/>
<evidence type="ECO:0000305" key="5">
    <source>
    </source>
</evidence>
<evidence type="ECO:0000312" key="6">
    <source>
        <dbReference type="EMBL" id="ADW21107.1"/>
    </source>
</evidence>
<evidence type="ECO:0007744" key="7">
    <source>
        <dbReference type="PDB" id="6P74"/>
    </source>
</evidence>
<evidence type="ECO:0007829" key="8">
    <source>
        <dbReference type="PDB" id="6P74"/>
    </source>
</evidence>
<dbReference type="EC" id="3.1.11.3" evidence="2"/>
<dbReference type="EMBL" id="CP001962">
    <property type="protein sequence ID" value="ADW21107.1"/>
    <property type="molecule type" value="Genomic_DNA"/>
</dbReference>
<dbReference type="PDB" id="6P74">
    <property type="method" value="X-ray"/>
    <property type="resolution" value="2.20 A"/>
    <property type="chains" value="A=1-528"/>
</dbReference>
<dbReference type="PDBsum" id="6P74"/>
<dbReference type="SMR" id="E8PLM2"/>
<dbReference type="STRING" id="743525.TSC_c04750"/>
<dbReference type="KEGG" id="tsc:TSC_c04750"/>
<dbReference type="eggNOG" id="COG1196">
    <property type="taxonomic scope" value="Bacteria"/>
</dbReference>
<dbReference type="eggNOG" id="COG3593">
    <property type="taxonomic scope" value="Bacteria"/>
</dbReference>
<dbReference type="HOGENOM" id="CLU_017618_1_0_0"/>
<dbReference type="Proteomes" id="UP000008087">
    <property type="component" value="Chromosome"/>
</dbReference>
<dbReference type="GO" id="GO:0005524">
    <property type="term" value="F:ATP binding"/>
    <property type="evidence" value="ECO:0007669"/>
    <property type="project" value="UniProtKB-KW"/>
</dbReference>
<dbReference type="GO" id="GO:0016887">
    <property type="term" value="F:ATP hydrolysis activity"/>
    <property type="evidence" value="ECO:0007669"/>
    <property type="project" value="InterPro"/>
</dbReference>
<dbReference type="GO" id="GO:0004527">
    <property type="term" value="F:exonuclease activity"/>
    <property type="evidence" value="ECO:0007669"/>
    <property type="project" value="UniProtKB-KW"/>
</dbReference>
<dbReference type="GO" id="GO:0046872">
    <property type="term" value="F:metal ion binding"/>
    <property type="evidence" value="ECO:0007669"/>
    <property type="project" value="UniProtKB-KW"/>
</dbReference>
<dbReference type="CDD" id="cd01026">
    <property type="entry name" value="TOPRIM_OLD"/>
    <property type="match status" value="1"/>
</dbReference>
<dbReference type="Gene3D" id="3.40.50.300">
    <property type="entry name" value="P-loop containing nucleotide triphosphate hydrolases"/>
    <property type="match status" value="1"/>
</dbReference>
<dbReference type="InterPro" id="IPR003959">
    <property type="entry name" value="ATPase_AAA_core"/>
</dbReference>
<dbReference type="InterPro" id="IPR051396">
    <property type="entry name" value="Bact_Antivir_Def_Nuclease"/>
</dbReference>
<dbReference type="InterPro" id="IPR027417">
    <property type="entry name" value="P-loop_NTPase"/>
</dbReference>
<dbReference type="InterPro" id="IPR034139">
    <property type="entry name" value="TOPRIM_OLD"/>
</dbReference>
<dbReference type="PANTHER" id="PTHR43581">
    <property type="entry name" value="ATP/GTP PHOSPHATASE"/>
    <property type="match status" value="1"/>
</dbReference>
<dbReference type="PANTHER" id="PTHR43581:SF4">
    <property type="entry name" value="ATP_GTP PHOSPHATASE"/>
    <property type="match status" value="1"/>
</dbReference>
<dbReference type="Pfam" id="PF13304">
    <property type="entry name" value="AAA_21"/>
    <property type="match status" value="1"/>
</dbReference>
<dbReference type="Pfam" id="PF20469">
    <property type="entry name" value="OLD-like_TOPRIM"/>
    <property type="match status" value="1"/>
</dbReference>
<dbReference type="SUPFAM" id="SSF52540">
    <property type="entry name" value="P-loop containing nucleoside triphosphate hydrolases"/>
    <property type="match status" value="1"/>
</dbReference>
<sequence>MLKRLQVKNFRCLEDIDLPLGPLTAIVGPNGAGKTTILRAIDLVLGDVWPSLRSFRIPQDFINFDTTRAIEITVHFDPPYTQGSFNITAFRLTCKGEDADFHVDLEPLDEGGNVPRYPSGNPLRVGTDMRNHARVLFLDHRRNLAQHLPSIRGSILGRLLQPVRREFKLQDNFKQVYEQAMDLLRTEQVKQIEKTIAETAKQMLGFLGKDAMKSMEIGFGFADPANPFNSLRLQYRESDLTLPGDELGLGIQSAIVVGIFEAFRQLGEKIGTVIIEEPEMYLHPQAQRYFYRLLCEMADKDQCQIIYSTHSPIFADVNRFEALRLVRKDRDDRVVVSYVREEDKSALDNVRNRFKLGGRFDTARNEVLFAKRALLVEGYGDRVAALQLFNQLEVDPDAECIAVVDCGGKAGIELIVGVCKALDIPFVVVHDEDVWPIDERADEETRRKQEQENKAEQEKNQRIQACAGAERVFVVQPSLEAALGIGRNASDKPYRIAEILKTVDVGQPPDALRPFVEAIRQVTRPMEE</sequence>
<reference evidence="6" key="1">
    <citation type="journal article" date="2011" name="BMC Genomics">
        <title>Sequence of the hyperplastic genome of the naturally competent Thermus scotoductus SA-01.</title>
        <authorList>
            <person name="Gounder K."/>
            <person name="Brzuszkiewicz E."/>
            <person name="Liesegang H."/>
            <person name="Wollherr A."/>
            <person name="Daniel R."/>
            <person name="Gottschalk G."/>
            <person name="Reva O."/>
            <person name="Kumwenda B."/>
            <person name="Srivastava M."/>
            <person name="Bricio C."/>
            <person name="Berenguer J."/>
            <person name="van Heerden E."/>
            <person name="Litthauer D."/>
        </authorList>
    </citation>
    <scope>NUCLEOTIDE SEQUENCE [LARGE SCALE GENOMIC DNA]</scope>
    <source>
        <strain>ATCC 700910 / SA-01</strain>
    </source>
</reference>
<reference evidence="7" key="2">
    <citation type="journal article" date="2020" name="Nucleic Acids Res.">
        <title>The full-length structure of Thermus scotoductus OLD defines the ATP hydrolysis properties and catalytic mechanism of Class 1 OLD family nucleases.</title>
        <authorList>
            <person name="Schiltz C.J."/>
            <person name="Adams M.C."/>
            <person name="Chappie J.S."/>
        </authorList>
    </citation>
    <scope>X-RAY CRYSTALLOGRAPHY (2.20 ANGSTROMS) IN COMPLEX WITH METAL AND ATP ANALOG</scope>
    <scope>FUNCTION</scope>
    <scope>CATALYTIC ACTIVITY</scope>
    <scope>PROBABLE ACTIVE SITE</scope>
    <scope>COFACTOR</scope>
    <scope>BIOPHYSICOCHEMICAL PROPERTIES</scope>
    <scope>SUBUNIT</scope>
    <scope>DOMAIN</scope>
    <scope>ATP-BINDING</scope>
    <scope>MUTAGENESIS OF LYS-34; HIS-140; GLU-276; HIS-283; HIS-310; GLU-377; ASP-381; ASP-431; ASP-433; SER-478; GLU-480 AND ARG-487</scope>
    <source>
        <strain>ATCC 700910 / SA-01</strain>
    </source>
</reference>
<protein>
    <recommendedName>
        <fullName evidence="3">OLD nuclease</fullName>
        <ecNumber evidence="2">3.1.11.3</ecNumber>
    </recommendedName>
    <alternativeName>
        <fullName evidence="4">Exodeoxyribonuclease OLD</fullName>
    </alternativeName>
    <alternativeName>
        <fullName evidence="3">Overcoming lysogenization defect</fullName>
        <shortName evidence="3">Old</shortName>
    </alternativeName>
</protein>
<proteinExistence type="evidence at protein level"/>
<organism>
    <name type="scientific">Thermus scotoductus (strain ATCC 700910 / SA-01)</name>
    <dbReference type="NCBI Taxonomy" id="743525"/>
    <lineage>
        <taxon>Bacteria</taxon>
        <taxon>Thermotogati</taxon>
        <taxon>Deinococcota</taxon>
        <taxon>Deinococci</taxon>
        <taxon>Thermales</taxon>
        <taxon>Thermaceae</taxon>
        <taxon>Thermus</taxon>
    </lineage>
</organism>
<keyword id="KW-0002">3D-structure</keyword>
<keyword id="KW-0067">ATP-binding</keyword>
<keyword id="KW-0269">Exonuclease</keyword>
<keyword id="KW-0378">Hydrolase</keyword>
<keyword id="KW-0479">Metal-binding</keyword>
<keyword id="KW-0540">Nuclease</keyword>
<keyword id="KW-0547">Nucleotide-binding</keyword>